<reference key="1">
    <citation type="journal article" date="2009" name="Environ. Microbiol.">
        <title>Genome sequence of Desulfobacterium autotrophicum HRM2, a marine sulfate reducer oxidizing organic carbon completely to carbon dioxide.</title>
        <authorList>
            <person name="Strittmatter A.W."/>
            <person name="Liesegang H."/>
            <person name="Rabus R."/>
            <person name="Decker I."/>
            <person name="Amann J."/>
            <person name="Andres S."/>
            <person name="Henne A."/>
            <person name="Fricke W.F."/>
            <person name="Martinez-Arias R."/>
            <person name="Bartels D."/>
            <person name="Goesmann A."/>
            <person name="Krause L."/>
            <person name="Puehler A."/>
            <person name="Klenk H.P."/>
            <person name="Richter M."/>
            <person name="Schuler M."/>
            <person name="Gloeckner F.O."/>
            <person name="Meyerdierks A."/>
            <person name="Gottschalk G."/>
            <person name="Amann R."/>
        </authorList>
    </citation>
    <scope>NUCLEOTIDE SEQUENCE [LARGE SCALE GENOMIC DNA]</scope>
    <source>
        <strain>ATCC 43914 / DSM 3382 / VKM B-1955 / HRM2</strain>
    </source>
</reference>
<evidence type="ECO:0000255" key="1">
    <source>
        <dbReference type="HAMAP-Rule" id="MF_00451"/>
    </source>
</evidence>
<sequence length="138" mass="15527">MERTLSIIKPDGVKKNLIGEVVKRFQDQGIHIAALKMMQLTQKQAQGFYAVHRERPFFNSLTEFMTSGPIVVMVLEGDDVIAKNRKLMGATNFKEAEEGTIRRDFATDIEKNVVHGSDAPETAAFEIGYFFNDMEIVG</sequence>
<name>NDK_DESAH</name>
<accession>C0QBA3</accession>
<dbReference type="EC" id="2.7.4.6" evidence="1"/>
<dbReference type="EMBL" id="CP001087">
    <property type="protein sequence ID" value="ACN14902.1"/>
    <property type="molecule type" value="Genomic_DNA"/>
</dbReference>
<dbReference type="RefSeq" id="WP_015903688.1">
    <property type="nucleotide sequence ID" value="NC_012108.1"/>
</dbReference>
<dbReference type="SMR" id="C0QBA3"/>
<dbReference type="STRING" id="177437.HRM2_18000"/>
<dbReference type="KEGG" id="dat:HRM2_18000"/>
<dbReference type="eggNOG" id="COG0105">
    <property type="taxonomic scope" value="Bacteria"/>
</dbReference>
<dbReference type="HOGENOM" id="CLU_060216_8_1_7"/>
<dbReference type="OrthoDB" id="9801161at2"/>
<dbReference type="Proteomes" id="UP000000442">
    <property type="component" value="Chromosome"/>
</dbReference>
<dbReference type="GO" id="GO:0005737">
    <property type="term" value="C:cytoplasm"/>
    <property type="evidence" value="ECO:0007669"/>
    <property type="project" value="UniProtKB-SubCell"/>
</dbReference>
<dbReference type="GO" id="GO:0005524">
    <property type="term" value="F:ATP binding"/>
    <property type="evidence" value="ECO:0007669"/>
    <property type="project" value="UniProtKB-UniRule"/>
</dbReference>
<dbReference type="GO" id="GO:0046872">
    <property type="term" value="F:metal ion binding"/>
    <property type="evidence" value="ECO:0007669"/>
    <property type="project" value="UniProtKB-KW"/>
</dbReference>
<dbReference type="GO" id="GO:0004550">
    <property type="term" value="F:nucleoside diphosphate kinase activity"/>
    <property type="evidence" value="ECO:0007669"/>
    <property type="project" value="UniProtKB-UniRule"/>
</dbReference>
<dbReference type="GO" id="GO:0006241">
    <property type="term" value="P:CTP biosynthetic process"/>
    <property type="evidence" value="ECO:0007669"/>
    <property type="project" value="UniProtKB-UniRule"/>
</dbReference>
<dbReference type="GO" id="GO:0006183">
    <property type="term" value="P:GTP biosynthetic process"/>
    <property type="evidence" value="ECO:0007669"/>
    <property type="project" value="UniProtKB-UniRule"/>
</dbReference>
<dbReference type="GO" id="GO:0006228">
    <property type="term" value="P:UTP biosynthetic process"/>
    <property type="evidence" value="ECO:0007669"/>
    <property type="project" value="UniProtKB-UniRule"/>
</dbReference>
<dbReference type="CDD" id="cd04413">
    <property type="entry name" value="NDPk_I"/>
    <property type="match status" value="1"/>
</dbReference>
<dbReference type="FunFam" id="3.30.70.141:FF:000003">
    <property type="entry name" value="Nucleoside diphosphate kinase"/>
    <property type="match status" value="1"/>
</dbReference>
<dbReference type="Gene3D" id="3.30.70.141">
    <property type="entry name" value="Nucleoside diphosphate kinase-like domain"/>
    <property type="match status" value="1"/>
</dbReference>
<dbReference type="HAMAP" id="MF_00451">
    <property type="entry name" value="NDP_kinase"/>
    <property type="match status" value="1"/>
</dbReference>
<dbReference type="InterPro" id="IPR034907">
    <property type="entry name" value="NDK-like_dom"/>
</dbReference>
<dbReference type="InterPro" id="IPR036850">
    <property type="entry name" value="NDK-like_dom_sf"/>
</dbReference>
<dbReference type="InterPro" id="IPR001564">
    <property type="entry name" value="Nucleoside_diP_kinase"/>
</dbReference>
<dbReference type="InterPro" id="IPR023005">
    <property type="entry name" value="Nucleoside_diP_kinase_AS"/>
</dbReference>
<dbReference type="NCBIfam" id="NF001908">
    <property type="entry name" value="PRK00668.1"/>
    <property type="match status" value="1"/>
</dbReference>
<dbReference type="PANTHER" id="PTHR11349">
    <property type="entry name" value="NUCLEOSIDE DIPHOSPHATE KINASE"/>
    <property type="match status" value="1"/>
</dbReference>
<dbReference type="Pfam" id="PF00334">
    <property type="entry name" value="NDK"/>
    <property type="match status" value="1"/>
</dbReference>
<dbReference type="PRINTS" id="PR01243">
    <property type="entry name" value="NUCDPKINASE"/>
</dbReference>
<dbReference type="SMART" id="SM00562">
    <property type="entry name" value="NDK"/>
    <property type="match status" value="1"/>
</dbReference>
<dbReference type="SUPFAM" id="SSF54919">
    <property type="entry name" value="Nucleoside diphosphate kinase, NDK"/>
    <property type="match status" value="1"/>
</dbReference>
<dbReference type="PROSITE" id="PS00469">
    <property type="entry name" value="NDPK"/>
    <property type="match status" value="1"/>
</dbReference>
<dbReference type="PROSITE" id="PS51374">
    <property type="entry name" value="NDPK_LIKE"/>
    <property type="match status" value="1"/>
</dbReference>
<feature type="chain" id="PRO_1000206208" description="Nucleoside diphosphate kinase">
    <location>
        <begin position="1"/>
        <end position="138"/>
    </location>
</feature>
<feature type="active site" description="Pros-phosphohistidine intermediate" evidence="1">
    <location>
        <position position="115"/>
    </location>
</feature>
<feature type="binding site" evidence="1">
    <location>
        <position position="9"/>
    </location>
    <ligand>
        <name>ATP</name>
        <dbReference type="ChEBI" id="CHEBI:30616"/>
    </ligand>
</feature>
<feature type="binding site" evidence="1">
    <location>
        <position position="57"/>
    </location>
    <ligand>
        <name>ATP</name>
        <dbReference type="ChEBI" id="CHEBI:30616"/>
    </ligand>
</feature>
<feature type="binding site" evidence="1">
    <location>
        <position position="85"/>
    </location>
    <ligand>
        <name>ATP</name>
        <dbReference type="ChEBI" id="CHEBI:30616"/>
    </ligand>
</feature>
<feature type="binding site" evidence="1">
    <location>
        <position position="91"/>
    </location>
    <ligand>
        <name>ATP</name>
        <dbReference type="ChEBI" id="CHEBI:30616"/>
    </ligand>
</feature>
<feature type="binding site" evidence="1">
    <location>
        <position position="102"/>
    </location>
    <ligand>
        <name>ATP</name>
        <dbReference type="ChEBI" id="CHEBI:30616"/>
    </ligand>
</feature>
<feature type="binding site" evidence="1">
    <location>
        <position position="112"/>
    </location>
    <ligand>
        <name>ATP</name>
        <dbReference type="ChEBI" id="CHEBI:30616"/>
    </ligand>
</feature>
<comment type="function">
    <text evidence="1">Major role in the synthesis of nucleoside triphosphates other than ATP. The ATP gamma phosphate is transferred to the NDP beta phosphate via a ping-pong mechanism, using a phosphorylated active-site intermediate.</text>
</comment>
<comment type="catalytic activity">
    <reaction evidence="1">
        <text>a 2'-deoxyribonucleoside 5'-diphosphate + ATP = a 2'-deoxyribonucleoside 5'-triphosphate + ADP</text>
        <dbReference type="Rhea" id="RHEA:44640"/>
        <dbReference type="ChEBI" id="CHEBI:30616"/>
        <dbReference type="ChEBI" id="CHEBI:61560"/>
        <dbReference type="ChEBI" id="CHEBI:73316"/>
        <dbReference type="ChEBI" id="CHEBI:456216"/>
        <dbReference type="EC" id="2.7.4.6"/>
    </reaction>
</comment>
<comment type="catalytic activity">
    <reaction evidence="1">
        <text>a ribonucleoside 5'-diphosphate + ATP = a ribonucleoside 5'-triphosphate + ADP</text>
        <dbReference type="Rhea" id="RHEA:18113"/>
        <dbReference type="ChEBI" id="CHEBI:30616"/>
        <dbReference type="ChEBI" id="CHEBI:57930"/>
        <dbReference type="ChEBI" id="CHEBI:61557"/>
        <dbReference type="ChEBI" id="CHEBI:456216"/>
        <dbReference type="EC" id="2.7.4.6"/>
    </reaction>
</comment>
<comment type="cofactor">
    <cofactor evidence="1">
        <name>Mg(2+)</name>
        <dbReference type="ChEBI" id="CHEBI:18420"/>
    </cofactor>
</comment>
<comment type="subunit">
    <text evidence="1">Homotetramer.</text>
</comment>
<comment type="subcellular location">
    <subcellularLocation>
        <location evidence="1">Cytoplasm</location>
    </subcellularLocation>
</comment>
<comment type="similarity">
    <text evidence="1">Belongs to the NDK family.</text>
</comment>
<proteinExistence type="inferred from homology"/>
<keyword id="KW-0067">ATP-binding</keyword>
<keyword id="KW-0963">Cytoplasm</keyword>
<keyword id="KW-0418">Kinase</keyword>
<keyword id="KW-0460">Magnesium</keyword>
<keyword id="KW-0479">Metal-binding</keyword>
<keyword id="KW-0546">Nucleotide metabolism</keyword>
<keyword id="KW-0547">Nucleotide-binding</keyword>
<keyword id="KW-0597">Phosphoprotein</keyword>
<keyword id="KW-1185">Reference proteome</keyword>
<keyword id="KW-0808">Transferase</keyword>
<gene>
    <name evidence="1" type="primary">ndk</name>
    <name type="ordered locus">HRM2_18000</name>
</gene>
<protein>
    <recommendedName>
        <fullName evidence="1">Nucleoside diphosphate kinase</fullName>
        <shortName evidence="1">NDK</shortName>
        <shortName evidence="1">NDP kinase</shortName>
        <ecNumber evidence="1">2.7.4.6</ecNumber>
    </recommendedName>
    <alternativeName>
        <fullName evidence="1">Nucleoside-2-P kinase</fullName>
    </alternativeName>
</protein>
<organism>
    <name type="scientific">Desulforapulum autotrophicum (strain ATCC 43914 / DSM 3382 / VKM B-1955 / HRM2)</name>
    <name type="common">Desulfobacterium autotrophicum</name>
    <dbReference type="NCBI Taxonomy" id="177437"/>
    <lineage>
        <taxon>Bacteria</taxon>
        <taxon>Pseudomonadati</taxon>
        <taxon>Thermodesulfobacteriota</taxon>
        <taxon>Desulfobacteria</taxon>
        <taxon>Desulfobacterales</taxon>
        <taxon>Desulfobacteraceae</taxon>
        <taxon>Desulforapulum</taxon>
    </lineage>
</organism>